<dbReference type="EC" id="1.-.-.-"/>
<dbReference type="EMBL" id="AE000516">
    <property type="protein sequence ID" value="AAK46175.1"/>
    <property type="status" value="ALT_INIT"/>
    <property type="molecule type" value="Genomic_DNA"/>
</dbReference>
<dbReference type="PIR" id="H70665">
    <property type="entry name" value="H70665"/>
</dbReference>
<dbReference type="SMR" id="P9WGQ0"/>
<dbReference type="KEGG" id="mtc:MT1904"/>
<dbReference type="HOGENOM" id="CLU_010194_1_2_11"/>
<dbReference type="Proteomes" id="UP000001020">
    <property type="component" value="Chromosome"/>
</dbReference>
<dbReference type="GO" id="GO:0016616">
    <property type="term" value="F:oxidoreductase activity, acting on the CH-OH group of donors, NAD or NADP as acceptor"/>
    <property type="evidence" value="ECO:0007669"/>
    <property type="project" value="TreeGrafter"/>
</dbReference>
<dbReference type="GO" id="GO:0030497">
    <property type="term" value="P:fatty acid elongation"/>
    <property type="evidence" value="ECO:0007669"/>
    <property type="project" value="TreeGrafter"/>
</dbReference>
<dbReference type="CDD" id="cd05233">
    <property type="entry name" value="SDR_c"/>
    <property type="match status" value="1"/>
</dbReference>
<dbReference type="Gene3D" id="3.40.50.720">
    <property type="entry name" value="NAD(P)-binding Rossmann-like Domain"/>
    <property type="match status" value="1"/>
</dbReference>
<dbReference type="InterPro" id="IPR036291">
    <property type="entry name" value="NAD(P)-bd_dom_sf"/>
</dbReference>
<dbReference type="InterPro" id="IPR002347">
    <property type="entry name" value="SDR_fam"/>
</dbReference>
<dbReference type="NCBIfam" id="NF004534">
    <property type="entry name" value="PRK05884.1"/>
    <property type="match status" value="1"/>
</dbReference>
<dbReference type="PANTHER" id="PTHR42760:SF40">
    <property type="entry name" value="3-OXOACYL-[ACYL-CARRIER-PROTEIN] REDUCTASE, CHLOROPLASTIC"/>
    <property type="match status" value="1"/>
</dbReference>
<dbReference type="PANTHER" id="PTHR42760">
    <property type="entry name" value="SHORT-CHAIN DEHYDROGENASES/REDUCTASES FAMILY MEMBER"/>
    <property type="match status" value="1"/>
</dbReference>
<dbReference type="Pfam" id="PF13561">
    <property type="entry name" value="adh_short_C2"/>
    <property type="match status" value="1"/>
</dbReference>
<dbReference type="SUPFAM" id="SSF51735">
    <property type="entry name" value="NAD(P)-binding Rossmann-fold domains"/>
    <property type="match status" value="1"/>
</dbReference>
<sequence>MEVLVTGGDTDLGRTMAEGFRNDGHKVTLVGARRGDLEVAAKELDVDAVVCDTTDPTSLTEARGLFPRHLDTIVNVPAPSWDAGDPRAYSVSDTANAWRNALDATVLSVVLTVQSVGDHLRSGGSIVSVVAENPPAGGAESAIKAALSNWIAGQAAVFGTRGITINTVACGRSVQTGYEGLSRTPAPVAAEIARLALFLTTPAARHITGQTLHVSHGALAHFG</sequence>
<accession>P9WGQ0</accession>
<accession>L0T7W6</accession>
<accession>P95158</accession>
<accession>Q7D7W5</accession>
<organism>
    <name type="scientific">Mycobacterium tuberculosis (strain CDC 1551 / Oshkosh)</name>
    <dbReference type="NCBI Taxonomy" id="83331"/>
    <lineage>
        <taxon>Bacteria</taxon>
        <taxon>Bacillati</taxon>
        <taxon>Actinomycetota</taxon>
        <taxon>Actinomycetes</taxon>
        <taxon>Mycobacteriales</taxon>
        <taxon>Mycobacteriaceae</taxon>
        <taxon>Mycobacterium</taxon>
        <taxon>Mycobacterium tuberculosis complex</taxon>
    </lineage>
</organism>
<protein>
    <recommendedName>
        <fullName>Putative oxidoreductase MT1904</fullName>
        <ecNumber>1.-.-.-</ecNumber>
    </recommendedName>
</protein>
<feature type="chain" id="PRO_0000428323" description="Putative oxidoreductase MT1904">
    <location>
        <begin position="1"/>
        <end position="223"/>
    </location>
</feature>
<feature type="binding site" evidence="1">
    <location>
        <begin position="4"/>
        <end position="28"/>
    </location>
    <ligand>
        <name>NADP(+)</name>
        <dbReference type="ChEBI" id="CHEBI:58349"/>
    </ligand>
</feature>
<feature type="binding site" evidence="1">
    <location>
        <position position="128"/>
    </location>
    <ligand>
        <name>substrate</name>
    </ligand>
</feature>
<comment type="similarity">
    <text evidence="2">Belongs to the short-chain dehydrogenases/reductases (SDR) family.</text>
</comment>
<comment type="sequence caution" evidence="2">
    <conflict type="erroneous initiation">
        <sequence resource="EMBL-CDS" id="AAK46175"/>
    </conflict>
    <text>Extended N-terminus.</text>
</comment>
<keyword id="KW-0560">Oxidoreductase</keyword>
<keyword id="KW-1185">Reference proteome</keyword>
<proteinExistence type="inferred from homology"/>
<reference key="1">
    <citation type="journal article" date="2002" name="J. Bacteriol.">
        <title>Whole-genome comparison of Mycobacterium tuberculosis clinical and laboratory strains.</title>
        <authorList>
            <person name="Fleischmann R.D."/>
            <person name="Alland D."/>
            <person name="Eisen J.A."/>
            <person name="Carpenter L."/>
            <person name="White O."/>
            <person name="Peterson J.D."/>
            <person name="DeBoy R.T."/>
            <person name="Dodson R.J."/>
            <person name="Gwinn M.L."/>
            <person name="Haft D.H."/>
            <person name="Hickey E.K."/>
            <person name="Kolonay J.F."/>
            <person name="Nelson W.C."/>
            <person name="Umayam L.A."/>
            <person name="Ermolaeva M.D."/>
            <person name="Salzberg S.L."/>
            <person name="Delcher A."/>
            <person name="Utterback T.R."/>
            <person name="Weidman J.F."/>
            <person name="Khouri H.M."/>
            <person name="Gill J."/>
            <person name="Mikula A."/>
            <person name="Bishai W."/>
            <person name="Jacobs W.R. Jr."/>
            <person name="Venter J.C."/>
            <person name="Fraser C.M."/>
        </authorList>
    </citation>
    <scope>NUCLEOTIDE SEQUENCE [LARGE SCALE GENOMIC DNA]</scope>
    <source>
        <strain>CDC 1551 / Oshkosh</strain>
    </source>
</reference>
<gene>
    <name type="ordered locus">MT1904</name>
</gene>
<evidence type="ECO:0000250" key="1"/>
<evidence type="ECO:0000305" key="2"/>
<name>Y1856_MYCTO</name>